<feature type="chain" id="PRO_0000060914" description="Cytochrome b">
    <location>
        <begin position="1"/>
        <end position="381"/>
    </location>
</feature>
<feature type="transmembrane region" description="Helical" evidence="2">
    <location>
        <begin position="33"/>
        <end position="53"/>
    </location>
</feature>
<feature type="transmembrane region" description="Helical" evidence="2">
    <location>
        <begin position="77"/>
        <end position="98"/>
    </location>
</feature>
<feature type="transmembrane region" description="Helical" evidence="2">
    <location>
        <begin position="113"/>
        <end position="133"/>
    </location>
</feature>
<feature type="transmembrane region" description="Helical" evidence="2">
    <location>
        <begin position="178"/>
        <end position="198"/>
    </location>
</feature>
<feature type="transmembrane region" description="Helical" evidence="2">
    <location>
        <begin position="226"/>
        <end position="246"/>
    </location>
</feature>
<feature type="transmembrane region" description="Helical" evidence="2">
    <location>
        <begin position="288"/>
        <end position="308"/>
    </location>
</feature>
<feature type="transmembrane region" description="Helical" evidence="2">
    <location>
        <begin position="320"/>
        <end position="340"/>
    </location>
</feature>
<feature type="transmembrane region" description="Helical" evidence="2">
    <location>
        <begin position="347"/>
        <end position="367"/>
    </location>
</feature>
<feature type="binding site" description="axial binding residue" evidence="2">
    <location>
        <position position="83"/>
    </location>
    <ligand>
        <name>heme b</name>
        <dbReference type="ChEBI" id="CHEBI:60344"/>
        <label>b562</label>
    </ligand>
    <ligandPart>
        <name>Fe</name>
        <dbReference type="ChEBI" id="CHEBI:18248"/>
    </ligandPart>
</feature>
<feature type="binding site" description="axial binding residue" evidence="2">
    <location>
        <position position="97"/>
    </location>
    <ligand>
        <name>heme b</name>
        <dbReference type="ChEBI" id="CHEBI:60344"/>
        <label>b566</label>
    </ligand>
    <ligandPart>
        <name>Fe</name>
        <dbReference type="ChEBI" id="CHEBI:18248"/>
    </ligandPart>
</feature>
<feature type="binding site" description="axial binding residue" evidence="2">
    <location>
        <position position="182"/>
    </location>
    <ligand>
        <name>heme b</name>
        <dbReference type="ChEBI" id="CHEBI:60344"/>
        <label>b562</label>
    </ligand>
    <ligandPart>
        <name>Fe</name>
        <dbReference type="ChEBI" id="CHEBI:18248"/>
    </ligandPart>
</feature>
<feature type="binding site" description="axial binding residue" evidence="2">
    <location>
        <position position="196"/>
    </location>
    <ligand>
        <name>heme b</name>
        <dbReference type="ChEBI" id="CHEBI:60344"/>
        <label>b566</label>
    </ligand>
    <ligandPart>
        <name>Fe</name>
        <dbReference type="ChEBI" id="CHEBI:18248"/>
    </ligandPart>
</feature>
<feature type="binding site" evidence="2">
    <location>
        <position position="201"/>
    </location>
    <ligand>
        <name>a ubiquinone</name>
        <dbReference type="ChEBI" id="CHEBI:16389"/>
    </ligand>
</feature>
<gene>
    <name type="primary">MT-CYB</name>
    <name type="synonym">COB</name>
    <name type="synonym">CYTB</name>
    <name type="synonym">MTCYB</name>
</gene>
<evidence type="ECO:0000250" key="1"/>
<evidence type="ECO:0000250" key="2">
    <source>
        <dbReference type="UniProtKB" id="P00157"/>
    </source>
</evidence>
<evidence type="ECO:0000255" key="3">
    <source>
        <dbReference type="PROSITE-ProRule" id="PRU00967"/>
    </source>
</evidence>
<evidence type="ECO:0000255" key="4">
    <source>
        <dbReference type="PROSITE-ProRule" id="PRU00968"/>
    </source>
</evidence>
<protein>
    <recommendedName>
        <fullName>Cytochrome b</fullName>
    </recommendedName>
    <alternativeName>
        <fullName>Complex III subunit 3</fullName>
    </alternativeName>
    <alternativeName>
        <fullName>Complex III subunit III</fullName>
    </alternativeName>
    <alternativeName>
        <fullName>Cytochrome b-c1 complex subunit 3</fullName>
    </alternativeName>
    <alternativeName>
        <fullName>Ubiquinol-cytochrome-c reductase complex cytochrome b subunit</fullName>
    </alternativeName>
</protein>
<proteinExistence type="inferred from homology"/>
<reference key="1">
    <citation type="journal article" date="1999" name="J. Mammal. Evol.">
        <title>Phylogenetic relationships and the radiation of sigmodontine rodents in South America: evidence from cytochrome b.</title>
        <authorList>
            <person name="Smith M.F."/>
            <person name="Patton J.L."/>
        </authorList>
    </citation>
    <scope>NUCLEOTIDE SEQUENCE [GENOMIC DNA]</scope>
    <source>
        <strain>Isolate MVZ 182670</strain>
    </source>
</reference>
<name>CYB_ELIMO</name>
<dbReference type="EMBL" id="AF108691">
    <property type="protein sequence ID" value="AAD45473.1"/>
    <property type="molecule type" value="Genomic_DNA"/>
</dbReference>
<dbReference type="GO" id="GO:0005743">
    <property type="term" value="C:mitochondrial inner membrane"/>
    <property type="evidence" value="ECO:0007669"/>
    <property type="project" value="UniProtKB-SubCell"/>
</dbReference>
<dbReference type="GO" id="GO:0045275">
    <property type="term" value="C:respiratory chain complex III"/>
    <property type="evidence" value="ECO:0007669"/>
    <property type="project" value="InterPro"/>
</dbReference>
<dbReference type="GO" id="GO:0046872">
    <property type="term" value="F:metal ion binding"/>
    <property type="evidence" value="ECO:0007669"/>
    <property type="project" value="UniProtKB-KW"/>
</dbReference>
<dbReference type="GO" id="GO:0008121">
    <property type="term" value="F:ubiquinol-cytochrome-c reductase activity"/>
    <property type="evidence" value="ECO:0007669"/>
    <property type="project" value="InterPro"/>
</dbReference>
<dbReference type="GO" id="GO:0006122">
    <property type="term" value="P:mitochondrial electron transport, ubiquinol to cytochrome c"/>
    <property type="evidence" value="ECO:0007669"/>
    <property type="project" value="TreeGrafter"/>
</dbReference>
<dbReference type="CDD" id="cd00290">
    <property type="entry name" value="cytochrome_b_C"/>
    <property type="match status" value="1"/>
</dbReference>
<dbReference type="CDD" id="cd00284">
    <property type="entry name" value="Cytochrome_b_N"/>
    <property type="match status" value="1"/>
</dbReference>
<dbReference type="FunFam" id="1.20.810.10:FF:000002">
    <property type="entry name" value="Cytochrome b"/>
    <property type="match status" value="1"/>
</dbReference>
<dbReference type="Gene3D" id="1.20.810.10">
    <property type="entry name" value="Cytochrome Bc1 Complex, Chain C"/>
    <property type="match status" value="1"/>
</dbReference>
<dbReference type="InterPro" id="IPR005798">
    <property type="entry name" value="Cyt_b/b6_C"/>
</dbReference>
<dbReference type="InterPro" id="IPR036150">
    <property type="entry name" value="Cyt_b/b6_C_sf"/>
</dbReference>
<dbReference type="InterPro" id="IPR005797">
    <property type="entry name" value="Cyt_b/b6_N"/>
</dbReference>
<dbReference type="InterPro" id="IPR027387">
    <property type="entry name" value="Cytb/b6-like_sf"/>
</dbReference>
<dbReference type="InterPro" id="IPR030689">
    <property type="entry name" value="Cytochrome_b"/>
</dbReference>
<dbReference type="InterPro" id="IPR048260">
    <property type="entry name" value="Cytochrome_b_C_euk/bac"/>
</dbReference>
<dbReference type="InterPro" id="IPR048259">
    <property type="entry name" value="Cytochrome_b_N_euk/bac"/>
</dbReference>
<dbReference type="InterPro" id="IPR016174">
    <property type="entry name" value="Di-haem_cyt_TM"/>
</dbReference>
<dbReference type="PANTHER" id="PTHR19271">
    <property type="entry name" value="CYTOCHROME B"/>
    <property type="match status" value="1"/>
</dbReference>
<dbReference type="PANTHER" id="PTHR19271:SF16">
    <property type="entry name" value="CYTOCHROME B"/>
    <property type="match status" value="1"/>
</dbReference>
<dbReference type="Pfam" id="PF00032">
    <property type="entry name" value="Cytochrom_B_C"/>
    <property type="match status" value="1"/>
</dbReference>
<dbReference type="Pfam" id="PF00033">
    <property type="entry name" value="Cytochrome_B"/>
    <property type="match status" value="1"/>
</dbReference>
<dbReference type="PIRSF" id="PIRSF038885">
    <property type="entry name" value="COB"/>
    <property type="match status" value="1"/>
</dbReference>
<dbReference type="SUPFAM" id="SSF81648">
    <property type="entry name" value="a domain/subunit of cytochrome bc1 complex (Ubiquinol-cytochrome c reductase)"/>
    <property type="match status" value="1"/>
</dbReference>
<dbReference type="SUPFAM" id="SSF81342">
    <property type="entry name" value="Transmembrane di-heme cytochromes"/>
    <property type="match status" value="1"/>
</dbReference>
<dbReference type="PROSITE" id="PS51003">
    <property type="entry name" value="CYTB_CTER"/>
    <property type="match status" value="1"/>
</dbReference>
<dbReference type="PROSITE" id="PS51002">
    <property type="entry name" value="CYTB_NTER"/>
    <property type="match status" value="1"/>
</dbReference>
<geneLocation type="mitochondrion"/>
<organism>
    <name type="scientific">Eligmodontia morgani</name>
    <name type="common">Morgan's gerbil mouse</name>
    <dbReference type="NCBI Taxonomy" id="89097"/>
    <lineage>
        <taxon>Eukaryota</taxon>
        <taxon>Metazoa</taxon>
        <taxon>Chordata</taxon>
        <taxon>Craniata</taxon>
        <taxon>Vertebrata</taxon>
        <taxon>Euteleostomi</taxon>
        <taxon>Mammalia</taxon>
        <taxon>Eutheria</taxon>
        <taxon>Euarchontoglires</taxon>
        <taxon>Glires</taxon>
        <taxon>Rodentia</taxon>
        <taxon>Myomorpha</taxon>
        <taxon>Muroidea</taxon>
        <taxon>Cricetidae</taxon>
        <taxon>Sigmodontinae</taxon>
        <taxon>Eligmodontia</taxon>
    </lineage>
</organism>
<keyword id="KW-0249">Electron transport</keyword>
<keyword id="KW-0349">Heme</keyword>
<keyword id="KW-0408">Iron</keyword>
<keyword id="KW-0472">Membrane</keyword>
<keyword id="KW-0479">Metal-binding</keyword>
<keyword id="KW-0496">Mitochondrion</keyword>
<keyword id="KW-0999">Mitochondrion inner membrane</keyword>
<keyword id="KW-0679">Respiratory chain</keyword>
<keyword id="KW-0812">Transmembrane</keyword>
<keyword id="KW-1133">Transmembrane helix</keyword>
<keyword id="KW-0813">Transport</keyword>
<keyword id="KW-0830">Ubiquinone</keyword>
<comment type="function">
    <text evidence="2">Component of the ubiquinol-cytochrome c reductase complex (complex III or cytochrome b-c1 complex) that is part of the mitochondrial respiratory chain. The b-c1 complex mediates electron transfer from ubiquinol to cytochrome c. Contributes to the generation of a proton gradient across the mitochondrial membrane that is then used for ATP synthesis.</text>
</comment>
<comment type="cofactor">
    <cofactor evidence="2">
        <name>heme b</name>
        <dbReference type="ChEBI" id="CHEBI:60344"/>
    </cofactor>
    <text evidence="2">Binds 2 heme b groups non-covalently.</text>
</comment>
<comment type="subunit">
    <text evidence="2">The cytochrome bc1 complex contains 11 subunits: 3 respiratory subunits (MT-CYB, CYC1 and UQCRFS1), 2 core proteins (UQCRC1 and UQCRC2) and 6 low-molecular weight proteins (UQCRH/QCR6, UQCRB/QCR7, UQCRQ/QCR8, UQCR10/QCR9, UQCR11/QCR10 and a cleavage product of UQCRFS1). This cytochrome bc1 complex then forms a dimer.</text>
</comment>
<comment type="subcellular location">
    <subcellularLocation>
        <location evidence="2">Mitochondrion inner membrane</location>
        <topology evidence="2">Multi-pass membrane protein</topology>
    </subcellularLocation>
</comment>
<comment type="miscellaneous">
    <text evidence="1">Heme 1 (or BL or b562) is low-potential and absorbs at about 562 nm, and heme 2 (or BH or b566) is high-potential and absorbs at about 566 nm.</text>
</comment>
<comment type="similarity">
    <text evidence="3 4">Belongs to the cytochrome b family.</text>
</comment>
<comment type="caution">
    <text evidence="2">The full-length protein contains only eight transmembrane helices, not nine as predicted by bioinformatics tools.</text>
</comment>
<accession>Q9XNV3</accession>
<sequence length="381" mass="43037">MMIMRKXHPLLKIVNDSFVDLPTPSNISSWWNFGSLLGICLVTQIITGLFLAMHYTSDTATAFSSVTHICRDVNYGWLIRYMHANGASMFFICLFIHVGRGIYYGSYMLSETWNIGIVLFLTTMATAFVGYVLPWGQMSFWGATVITNLLSAIPYIGTTLVEWIWGGFSVDKATLTRFFAFHFILPFIITALVLVHLLFLHETGSNNPSGLNSNSDKIPFHPYYTIKDLLGVLLLLMVLMILVLFXPDVLGDPDNYTPANPLNTPAHIKPEWYFLFAYAILRSIPNKLGGVLALILSILILALFPLLNTSKQHGLTYRPITQFLYWIFIANLLILTWIGGQPVEYPFTTIGQMASILYFSIIIIFMPIASMIENDILKLHF</sequence>